<feature type="chain" id="PRO_1000092996" description="Peptidyl-tRNA hydrolase">
    <location>
        <begin position="1"/>
        <end position="184"/>
    </location>
</feature>
<feature type="active site" description="Proton acceptor" evidence="1">
    <location>
        <position position="19"/>
    </location>
</feature>
<feature type="binding site" evidence="1">
    <location>
        <position position="14"/>
    </location>
    <ligand>
        <name>tRNA</name>
        <dbReference type="ChEBI" id="CHEBI:17843"/>
    </ligand>
</feature>
<feature type="binding site" evidence="1">
    <location>
        <position position="64"/>
    </location>
    <ligand>
        <name>tRNA</name>
        <dbReference type="ChEBI" id="CHEBI:17843"/>
    </ligand>
</feature>
<feature type="binding site" evidence="1">
    <location>
        <position position="66"/>
    </location>
    <ligand>
        <name>tRNA</name>
        <dbReference type="ChEBI" id="CHEBI:17843"/>
    </ligand>
</feature>
<feature type="binding site" evidence="1">
    <location>
        <position position="112"/>
    </location>
    <ligand>
        <name>tRNA</name>
        <dbReference type="ChEBI" id="CHEBI:17843"/>
    </ligand>
</feature>
<feature type="site" description="Discriminates between blocked and unblocked aminoacyl-tRNA" evidence="1">
    <location>
        <position position="9"/>
    </location>
</feature>
<feature type="site" description="Stabilizes the basic form of H active site to accept a proton" evidence="1">
    <location>
        <position position="91"/>
    </location>
</feature>
<reference key="1">
    <citation type="submission" date="2008-01" db="EMBL/GenBank/DDBJ databases">
        <title>Complete sequence of Thermoanaerobacter sp. X514.</title>
        <authorList>
            <consortium name="US DOE Joint Genome Institute"/>
            <person name="Copeland A."/>
            <person name="Lucas S."/>
            <person name="Lapidus A."/>
            <person name="Barry K."/>
            <person name="Glavina del Rio T."/>
            <person name="Dalin E."/>
            <person name="Tice H."/>
            <person name="Pitluck S."/>
            <person name="Bruce D."/>
            <person name="Goodwin L."/>
            <person name="Saunders E."/>
            <person name="Brettin T."/>
            <person name="Detter J.C."/>
            <person name="Han C."/>
            <person name="Schmutz J."/>
            <person name="Larimer F."/>
            <person name="Land M."/>
            <person name="Hauser L."/>
            <person name="Kyrpides N."/>
            <person name="Kim E."/>
            <person name="Hemme C."/>
            <person name="Fields M.W."/>
            <person name="He Z."/>
            <person name="Zhou J."/>
            <person name="Richardson P."/>
        </authorList>
    </citation>
    <scope>NUCLEOTIDE SEQUENCE [LARGE SCALE GENOMIC DNA]</scope>
    <source>
        <strain>X514</strain>
    </source>
</reference>
<name>PTH_THEPX</name>
<accession>B0K466</accession>
<keyword id="KW-0963">Cytoplasm</keyword>
<keyword id="KW-0378">Hydrolase</keyword>
<keyword id="KW-0694">RNA-binding</keyword>
<keyword id="KW-0820">tRNA-binding</keyword>
<dbReference type="EC" id="3.1.1.29" evidence="1"/>
<dbReference type="EMBL" id="CP000923">
    <property type="protein sequence ID" value="ABY91899.1"/>
    <property type="molecule type" value="Genomic_DNA"/>
</dbReference>
<dbReference type="RefSeq" id="WP_009052124.1">
    <property type="nucleotide sequence ID" value="NC_010320.1"/>
</dbReference>
<dbReference type="SMR" id="B0K466"/>
<dbReference type="KEGG" id="tex:Teth514_0591"/>
<dbReference type="HOGENOM" id="CLU_062456_4_1_9"/>
<dbReference type="Proteomes" id="UP000002155">
    <property type="component" value="Chromosome"/>
</dbReference>
<dbReference type="GO" id="GO:0005737">
    <property type="term" value="C:cytoplasm"/>
    <property type="evidence" value="ECO:0007669"/>
    <property type="project" value="UniProtKB-SubCell"/>
</dbReference>
<dbReference type="GO" id="GO:0004045">
    <property type="term" value="F:peptidyl-tRNA hydrolase activity"/>
    <property type="evidence" value="ECO:0007669"/>
    <property type="project" value="UniProtKB-UniRule"/>
</dbReference>
<dbReference type="GO" id="GO:0000049">
    <property type="term" value="F:tRNA binding"/>
    <property type="evidence" value="ECO:0007669"/>
    <property type="project" value="UniProtKB-UniRule"/>
</dbReference>
<dbReference type="GO" id="GO:0006515">
    <property type="term" value="P:protein quality control for misfolded or incompletely synthesized proteins"/>
    <property type="evidence" value="ECO:0007669"/>
    <property type="project" value="UniProtKB-UniRule"/>
</dbReference>
<dbReference type="GO" id="GO:0072344">
    <property type="term" value="P:rescue of stalled ribosome"/>
    <property type="evidence" value="ECO:0007669"/>
    <property type="project" value="UniProtKB-UniRule"/>
</dbReference>
<dbReference type="CDD" id="cd00462">
    <property type="entry name" value="PTH"/>
    <property type="match status" value="1"/>
</dbReference>
<dbReference type="FunFam" id="3.40.50.1470:FF:000001">
    <property type="entry name" value="Peptidyl-tRNA hydrolase"/>
    <property type="match status" value="1"/>
</dbReference>
<dbReference type="Gene3D" id="3.40.50.1470">
    <property type="entry name" value="Peptidyl-tRNA hydrolase"/>
    <property type="match status" value="1"/>
</dbReference>
<dbReference type="HAMAP" id="MF_00083">
    <property type="entry name" value="Pept_tRNA_hydro_bact"/>
    <property type="match status" value="1"/>
</dbReference>
<dbReference type="InterPro" id="IPR001328">
    <property type="entry name" value="Pept_tRNA_hydro"/>
</dbReference>
<dbReference type="InterPro" id="IPR018171">
    <property type="entry name" value="Pept_tRNA_hydro_CS"/>
</dbReference>
<dbReference type="InterPro" id="IPR036416">
    <property type="entry name" value="Pept_tRNA_hydro_sf"/>
</dbReference>
<dbReference type="NCBIfam" id="TIGR00447">
    <property type="entry name" value="pth"/>
    <property type="match status" value="1"/>
</dbReference>
<dbReference type="PANTHER" id="PTHR17224">
    <property type="entry name" value="PEPTIDYL-TRNA HYDROLASE"/>
    <property type="match status" value="1"/>
</dbReference>
<dbReference type="PANTHER" id="PTHR17224:SF1">
    <property type="entry name" value="PEPTIDYL-TRNA HYDROLASE"/>
    <property type="match status" value="1"/>
</dbReference>
<dbReference type="Pfam" id="PF01195">
    <property type="entry name" value="Pept_tRNA_hydro"/>
    <property type="match status" value="1"/>
</dbReference>
<dbReference type="SUPFAM" id="SSF53178">
    <property type="entry name" value="Peptidyl-tRNA hydrolase-like"/>
    <property type="match status" value="1"/>
</dbReference>
<dbReference type="PROSITE" id="PS01195">
    <property type="entry name" value="PEPT_TRNA_HYDROL_1"/>
    <property type="match status" value="1"/>
</dbReference>
<sequence>MYVIAGLGNPGREYEGTRHNVGFMVIDELAKKLGMNVTKLKFKSLVGEGNFKGEKIILLKPQTFMNSSGEALYDAVNFYKIPLENVIVIYDDKDLDLGKIRIRKKGSSGGHNGMNSIIYLLNSEEFPRVRIGIGKPQKDLVSHVLGKFEESEKKLIDEAVIKAADAVIDIIENGIEHAMSKFNG</sequence>
<organism>
    <name type="scientific">Thermoanaerobacter sp. (strain X514)</name>
    <dbReference type="NCBI Taxonomy" id="399726"/>
    <lineage>
        <taxon>Bacteria</taxon>
        <taxon>Bacillati</taxon>
        <taxon>Bacillota</taxon>
        <taxon>Clostridia</taxon>
        <taxon>Thermoanaerobacterales</taxon>
        <taxon>Thermoanaerobacteraceae</taxon>
        <taxon>Thermoanaerobacter</taxon>
    </lineage>
</organism>
<gene>
    <name evidence="1" type="primary">pth</name>
    <name type="ordered locus">Teth514_0591</name>
</gene>
<comment type="function">
    <text evidence="1">Hydrolyzes ribosome-free peptidyl-tRNAs (with 1 or more amino acids incorporated), which drop off the ribosome during protein synthesis, or as a result of ribosome stalling.</text>
</comment>
<comment type="function">
    <text evidence="1">Catalyzes the release of premature peptidyl moieties from peptidyl-tRNA molecules trapped in stalled 50S ribosomal subunits, and thus maintains levels of free tRNAs and 50S ribosomes.</text>
</comment>
<comment type="catalytic activity">
    <reaction evidence="1">
        <text>an N-acyl-L-alpha-aminoacyl-tRNA + H2O = an N-acyl-L-amino acid + a tRNA + H(+)</text>
        <dbReference type="Rhea" id="RHEA:54448"/>
        <dbReference type="Rhea" id="RHEA-COMP:10123"/>
        <dbReference type="Rhea" id="RHEA-COMP:13883"/>
        <dbReference type="ChEBI" id="CHEBI:15377"/>
        <dbReference type="ChEBI" id="CHEBI:15378"/>
        <dbReference type="ChEBI" id="CHEBI:59874"/>
        <dbReference type="ChEBI" id="CHEBI:78442"/>
        <dbReference type="ChEBI" id="CHEBI:138191"/>
        <dbReference type="EC" id="3.1.1.29"/>
    </reaction>
</comment>
<comment type="subunit">
    <text evidence="1">Monomer.</text>
</comment>
<comment type="subcellular location">
    <subcellularLocation>
        <location evidence="1">Cytoplasm</location>
    </subcellularLocation>
</comment>
<comment type="similarity">
    <text evidence="1">Belongs to the PTH family.</text>
</comment>
<evidence type="ECO:0000255" key="1">
    <source>
        <dbReference type="HAMAP-Rule" id="MF_00083"/>
    </source>
</evidence>
<proteinExistence type="inferred from homology"/>
<protein>
    <recommendedName>
        <fullName evidence="1">Peptidyl-tRNA hydrolase</fullName>
        <shortName evidence="1">Pth</shortName>
        <ecNumber evidence="1">3.1.1.29</ecNumber>
    </recommendedName>
</protein>